<gene>
    <name evidence="1" type="primary">pfdA</name>
    <name type="ordered locus">MK1614</name>
</gene>
<keyword id="KW-0143">Chaperone</keyword>
<keyword id="KW-0963">Cytoplasm</keyword>
<keyword id="KW-1185">Reference proteome</keyword>
<protein>
    <recommendedName>
        <fullName evidence="1">Prefoldin subunit alpha</fullName>
    </recommendedName>
    <alternativeName>
        <fullName evidence="1">GimC subunit alpha</fullName>
    </alternativeName>
</protein>
<feature type="chain" id="PRO_0000153676" description="Prefoldin subunit alpha">
    <location>
        <begin position="1"/>
        <end position="157"/>
    </location>
</feature>
<organism>
    <name type="scientific">Methanopyrus kandleri (strain AV19 / DSM 6324 / JCM 9639 / NBRC 100938)</name>
    <dbReference type="NCBI Taxonomy" id="190192"/>
    <lineage>
        <taxon>Archaea</taxon>
        <taxon>Methanobacteriati</taxon>
        <taxon>Methanobacteriota</taxon>
        <taxon>Methanomada group</taxon>
        <taxon>Methanopyri</taxon>
        <taxon>Methanopyrales</taxon>
        <taxon>Methanopyraceae</taxon>
        <taxon>Methanopyrus</taxon>
    </lineage>
</organism>
<sequence length="157" mass="17446">MAEKKNEQEIQQELQRLIAEINRLQGQMEAINAQIDLIESSISELNRVEETLKGVKELEGDEEVLVPVGAQSFVRACVTDTERVIVGIGAGVAVERTIDEALESIDDQRQELEKARAEAQQKLQELAQELQEKQRKAQELAQQLEGAQRIAQQSGGG</sequence>
<proteinExistence type="inferred from homology"/>
<accession>Q8TUY7</accession>
<dbReference type="EMBL" id="AE009439">
    <property type="protein sequence ID" value="AAM02827.1"/>
    <property type="molecule type" value="Genomic_DNA"/>
</dbReference>
<dbReference type="RefSeq" id="WP_011019982.1">
    <property type="nucleotide sequence ID" value="NC_003551.1"/>
</dbReference>
<dbReference type="SMR" id="Q8TUY7"/>
<dbReference type="FunCoup" id="Q8TUY7">
    <property type="interactions" value="2"/>
</dbReference>
<dbReference type="STRING" id="190192.MK1614"/>
<dbReference type="PaxDb" id="190192-MK1614"/>
<dbReference type="EnsemblBacteria" id="AAM02827">
    <property type="protein sequence ID" value="AAM02827"/>
    <property type="gene ID" value="MK1614"/>
</dbReference>
<dbReference type="GeneID" id="1478209"/>
<dbReference type="KEGG" id="mka:MK1614"/>
<dbReference type="HOGENOM" id="CLU_091867_1_3_2"/>
<dbReference type="InParanoid" id="Q8TUY7"/>
<dbReference type="OrthoDB" id="10045at2157"/>
<dbReference type="Proteomes" id="UP000001826">
    <property type="component" value="Chromosome"/>
</dbReference>
<dbReference type="GO" id="GO:0005737">
    <property type="term" value="C:cytoplasm"/>
    <property type="evidence" value="ECO:0007669"/>
    <property type="project" value="UniProtKB-SubCell"/>
</dbReference>
<dbReference type="GO" id="GO:0016272">
    <property type="term" value="C:prefoldin complex"/>
    <property type="evidence" value="ECO:0007669"/>
    <property type="project" value="UniProtKB-UniRule"/>
</dbReference>
<dbReference type="GO" id="GO:0051082">
    <property type="term" value="F:unfolded protein binding"/>
    <property type="evidence" value="ECO:0007669"/>
    <property type="project" value="UniProtKB-UniRule"/>
</dbReference>
<dbReference type="GO" id="GO:0006457">
    <property type="term" value="P:protein folding"/>
    <property type="evidence" value="ECO:0007669"/>
    <property type="project" value="UniProtKB-UniRule"/>
</dbReference>
<dbReference type="CDD" id="cd23160">
    <property type="entry name" value="Prefoldin_alpha_GimC"/>
    <property type="match status" value="1"/>
</dbReference>
<dbReference type="Gene3D" id="1.10.287.370">
    <property type="match status" value="1"/>
</dbReference>
<dbReference type="HAMAP" id="MF_00308">
    <property type="entry name" value="PfdA"/>
    <property type="match status" value="1"/>
</dbReference>
<dbReference type="InterPro" id="IPR011599">
    <property type="entry name" value="PFD_alpha_archaea"/>
</dbReference>
<dbReference type="InterPro" id="IPR009053">
    <property type="entry name" value="Prefoldin"/>
</dbReference>
<dbReference type="InterPro" id="IPR004127">
    <property type="entry name" value="Prefoldin_subunit_alpha"/>
</dbReference>
<dbReference type="NCBIfam" id="TIGR00293">
    <property type="entry name" value="prefoldin subunit alpha"/>
    <property type="match status" value="1"/>
</dbReference>
<dbReference type="PANTHER" id="PTHR12674">
    <property type="entry name" value="PREFOLDIN SUBUNIT 5"/>
    <property type="match status" value="1"/>
</dbReference>
<dbReference type="PANTHER" id="PTHR12674:SF2">
    <property type="entry name" value="PREFOLDIN SUBUNIT 5"/>
    <property type="match status" value="1"/>
</dbReference>
<dbReference type="Pfam" id="PF02996">
    <property type="entry name" value="Prefoldin"/>
    <property type="match status" value="1"/>
</dbReference>
<dbReference type="SUPFAM" id="SSF46579">
    <property type="entry name" value="Prefoldin"/>
    <property type="match status" value="1"/>
</dbReference>
<evidence type="ECO:0000255" key="1">
    <source>
        <dbReference type="HAMAP-Rule" id="MF_00308"/>
    </source>
</evidence>
<evidence type="ECO:0000305" key="2"/>
<name>PFDA_METKA</name>
<reference key="1">
    <citation type="journal article" date="2002" name="Proc. Natl. Acad. Sci. U.S.A.">
        <title>The complete genome of hyperthermophile Methanopyrus kandleri AV19 and monophyly of archaeal methanogens.</title>
        <authorList>
            <person name="Slesarev A.I."/>
            <person name="Mezhevaya K.V."/>
            <person name="Makarova K.S."/>
            <person name="Polushin N.N."/>
            <person name="Shcherbinina O.V."/>
            <person name="Shakhova V.V."/>
            <person name="Belova G.I."/>
            <person name="Aravind L."/>
            <person name="Natale D.A."/>
            <person name="Rogozin I.B."/>
            <person name="Tatusov R.L."/>
            <person name="Wolf Y.I."/>
            <person name="Stetter K.O."/>
            <person name="Malykh A.G."/>
            <person name="Koonin E.V."/>
            <person name="Kozyavkin S.A."/>
        </authorList>
    </citation>
    <scope>NUCLEOTIDE SEQUENCE [LARGE SCALE GENOMIC DNA]</scope>
    <source>
        <strain>AV19 / DSM 6324 / JCM 9639 / NBRC 100938</strain>
    </source>
</reference>
<comment type="function">
    <text evidence="1">Molecular chaperone capable of stabilizing a range of proteins. Seems to fulfill an ATP-independent, HSP70-like function in archaeal de novo protein folding.</text>
</comment>
<comment type="subunit">
    <text evidence="1">Heterohexamer of two alpha and four beta subunits.</text>
</comment>
<comment type="subcellular location">
    <subcellularLocation>
        <location evidence="1">Cytoplasm</location>
    </subcellularLocation>
</comment>
<comment type="similarity">
    <text evidence="2">Belongs to the prefoldin subunit alpha family.</text>
</comment>